<accession>B2U7F0</accession>
<organism>
    <name type="scientific">Ralstonia pickettii (strain 12J)</name>
    <dbReference type="NCBI Taxonomy" id="402626"/>
    <lineage>
        <taxon>Bacteria</taxon>
        <taxon>Pseudomonadati</taxon>
        <taxon>Pseudomonadota</taxon>
        <taxon>Betaproteobacteria</taxon>
        <taxon>Burkholderiales</taxon>
        <taxon>Burkholderiaceae</taxon>
        <taxon>Ralstonia</taxon>
    </lineage>
</organism>
<reference key="1">
    <citation type="submission" date="2008-05" db="EMBL/GenBank/DDBJ databases">
        <title>Complete sequence of chromosome 1 of Ralstonia pickettii 12J.</title>
        <authorList>
            <person name="Lucas S."/>
            <person name="Copeland A."/>
            <person name="Lapidus A."/>
            <person name="Glavina del Rio T."/>
            <person name="Dalin E."/>
            <person name="Tice H."/>
            <person name="Bruce D."/>
            <person name="Goodwin L."/>
            <person name="Pitluck S."/>
            <person name="Meincke L."/>
            <person name="Brettin T."/>
            <person name="Detter J.C."/>
            <person name="Han C."/>
            <person name="Kuske C.R."/>
            <person name="Schmutz J."/>
            <person name="Larimer F."/>
            <person name="Land M."/>
            <person name="Hauser L."/>
            <person name="Kyrpides N."/>
            <person name="Mikhailova N."/>
            <person name="Marsh T."/>
            <person name="Richardson P."/>
        </authorList>
    </citation>
    <scope>NUCLEOTIDE SEQUENCE [LARGE SCALE GENOMIC DNA]</scope>
    <source>
        <strain>12J</strain>
    </source>
</reference>
<feature type="chain" id="PRO_1000098220" description="6,7-dimethyl-8-ribityllumazine synthase">
    <location>
        <begin position="1"/>
        <end position="166"/>
    </location>
</feature>
<feature type="active site" description="Proton donor" evidence="1">
    <location>
        <position position="90"/>
    </location>
</feature>
<feature type="binding site" evidence="1">
    <location>
        <position position="24"/>
    </location>
    <ligand>
        <name>5-amino-6-(D-ribitylamino)uracil</name>
        <dbReference type="ChEBI" id="CHEBI:15934"/>
    </ligand>
</feature>
<feature type="binding site" evidence="1">
    <location>
        <begin position="58"/>
        <end position="60"/>
    </location>
    <ligand>
        <name>5-amino-6-(D-ribitylamino)uracil</name>
        <dbReference type="ChEBI" id="CHEBI:15934"/>
    </ligand>
</feature>
<feature type="binding site" evidence="1">
    <location>
        <begin position="82"/>
        <end position="84"/>
    </location>
    <ligand>
        <name>5-amino-6-(D-ribitylamino)uracil</name>
        <dbReference type="ChEBI" id="CHEBI:15934"/>
    </ligand>
</feature>
<feature type="binding site" evidence="1">
    <location>
        <begin position="87"/>
        <end position="88"/>
    </location>
    <ligand>
        <name>(2S)-2-hydroxy-3-oxobutyl phosphate</name>
        <dbReference type="ChEBI" id="CHEBI:58830"/>
    </ligand>
</feature>
<feature type="binding site" evidence="1">
    <location>
        <position position="115"/>
    </location>
    <ligand>
        <name>5-amino-6-(D-ribitylamino)uracil</name>
        <dbReference type="ChEBI" id="CHEBI:15934"/>
    </ligand>
</feature>
<feature type="binding site" evidence="1">
    <location>
        <position position="129"/>
    </location>
    <ligand>
        <name>(2S)-2-hydroxy-3-oxobutyl phosphate</name>
        <dbReference type="ChEBI" id="CHEBI:58830"/>
    </ligand>
</feature>
<gene>
    <name evidence="1" type="primary">ribH</name>
    <name type="ordered locus">Rpic_0661</name>
</gene>
<dbReference type="EC" id="2.5.1.78" evidence="1"/>
<dbReference type="EMBL" id="CP001068">
    <property type="protein sequence ID" value="ACD25812.1"/>
    <property type="molecule type" value="Genomic_DNA"/>
</dbReference>
<dbReference type="SMR" id="B2U7F0"/>
<dbReference type="STRING" id="402626.Rpic_0661"/>
<dbReference type="KEGG" id="rpi:Rpic_0661"/>
<dbReference type="eggNOG" id="COG0054">
    <property type="taxonomic scope" value="Bacteria"/>
</dbReference>
<dbReference type="HOGENOM" id="CLU_089358_1_2_4"/>
<dbReference type="UniPathway" id="UPA00275">
    <property type="reaction ID" value="UER00404"/>
</dbReference>
<dbReference type="GO" id="GO:0005829">
    <property type="term" value="C:cytosol"/>
    <property type="evidence" value="ECO:0007669"/>
    <property type="project" value="TreeGrafter"/>
</dbReference>
<dbReference type="GO" id="GO:0009349">
    <property type="term" value="C:riboflavin synthase complex"/>
    <property type="evidence" value="ECO:0007669"/>
    <property type="project" value="InterPro"/>
</dbReference>
<dbReference type="GO" id="GO:0000906">
    <property type="term" value="F:6,7-dimethyl-8-ribityllumazine synthase activity"/>
    <property type="evidence" value="ECO:0007669"/>
    <property type="project" value="UniProtKB-UniRule"/>
</dbReference>
<dbReference type="GO" id="GO:0009231">
    <property type="term" value="P:riboflavin biosynthetic process"/>
    <property type="evidence" value="ECO:0007669"/>
    <property type="project" value="UniProtKB-UniRule"/>
</dbReference>
<dbReference type="CDD" id="cd09209">
    <property type="entry name" value="Lumazine_synthase-I"/>
    <property type="match status" value="1"/>
</dbReference>
<dbReference type="Gene3D" id="3.40.50.960">
    <property type="entry name" value="Lumazine/riboflavin synthase"/>
    <property type="match status" value="1"/>
</dbReference>
<dbReference type="HAMAP" id="MF_00178">
    <property type="entry name" value="Lumazine_synth"/>
    <property type="match status" value="1"/>
</dbReference>
<dbReference type="InterPro" id="IPR034964">
    <property type="entry name" value="LS"/>
</dbReference>
<dbReference type="InterPro" id="IPR002180">
    <property type="entry name" value="LS/RS"/>
</dbReference>
<dbReference type="InterPro" id="IPR036467">
    <property type="entry name" value="LS/RS_sf"/>
</dbReference>
<dbReference type="NCBIfam" id="TIGR00114">
    <property type="entry name" value="lumazine-synth"/>
    <property type="match status" value="1"/>
</dbReference>
<dbReference type="PANTHER" id="PTHR21058:SF0">
    <property type="entry name" value="6,7-DIMETHYL-8-RIBITYLLUMAZINE SYNTHASE"/>
    <property type="match status" value="1"/>
</dbReference>
<dbReference type="PANTHER" id="PTHR21058">
    <property type="entry name" value="6,7-DIMETHYL-8-RIBITYLLUMAZINE SYNTHASE DMRL SYNTHASE LUMAZINE SYNTHASE"/>
    <property type="match status" value="1"/>
</dbReference>
<dbReference type="Pfam" id="PF00885">
    <property type="entry name" value="DMRL_synthase"/>
    <property type="match status" value="1"/>
</dbReference>
<dbReference type="SUPFAM" id="SSF52121">
    <property type="entry name" value="Lumazine synthase"/>
    <property type="match status" value="1"/>
</dbReference>
<keyword id="KW-0686">Riboflavin biosynthesis</keyword>
<keyword id="KW-0808">Transferase</keyword>
<evidence type="ECO:0000255" key="1">
    <source>
        <dbReference type="HAMAP-Rule" id="MF_00178"/>
    </source>
</evidence>
<sequence>MDHGFYPTNLNGEGLRIGIVQARFNEPVCEALREACVAELEQLGVAGEDVLLVTVPGALEVPLALQKMAESGQFDALIALGAVIRGETYHFELVSNESGAGITRVGLDFNIAIANGILTTDTDAQAHARTREKGRDCARTAVEMANLTNDLDGLQDHGQDDDGENE</sequence>
<name>RISB_RALPJ</name>
<proteinExistence type="inferred from homology"/>
<comment type="function">
    <text evidence="1">Catalyzes the formation of 6,7-dimethyl-8-ribityllumazine by condensation of 5-amino-6-(D-ribitylamino)uracil with 3,4-dihydroxy-2-butanone 4-phosphate. This is the penultimate step in the biosynthesis of riboflavin.</text>
</comment>
<comment type="catalytic activity">
    <reaction evidence="1">
        <text>(2S)-2-hydroxy-3-oxobutyl phosphate + 5-amino-6-(D-ribitylamino)uracil = 6,7-dimethyl-8-(1-D-ribityl)lumazine + phosphate + 2 H2O + H(+)</text>
        <dbReference type="Rhea" id="RHEA:26152"/>
        <dbReference type="ChEBI" id="CHEBI:15377"/>
        <dbReference type="ChEBI" id="CHEBI:15378"/>
        <dbReference type="ChEBI" id="CHEBI:15934"/>
        <dbReference type="ChEBI" id="CHEBI:43474"/>
        <dbReference type="ChEBI" id="CHEBI:58201"/>
        <dbReference type="ChEBI" id="CHEBI:58830"/>
        <dbReference type="EC" id="2.5.1.78"/>
    </reaction>
</comment>
<comment type="pathway">
    <text evidence="1">Cofactor biosynthesis; riboflavin biosynthesis; riboflavin from 2-hydroxy-3-oxobutyl phosphate and 5-amino-6-(D-ribitylamino)uracil: step 1/2.</text>
</comment>
<comment type="similarity">
    <text evidence="1">Belongs to the DMRL synthase family.</text>
</comment>
<protein>
    <recommendedName>
        <fullName evidence="1">6,7-dimethyl-8-ribityllumazine synthase</fullName>
        <shortName evidence="1">DMRL synthase</shortName>
        <shortName evidence="1">LS</shortName>
        <shortName evidence="1">Lumazine synthase</shortName>
        <ecNumber evidence="1">2.5.1.78</ecNumber>
    </recommendedName>
</protein>